<proteinExistence type="inferred from homology"/>
<comment type="function">
    <text evidence="1">Key component of the proton channel; it plays a direct role in the translocation of protons across the membrane.</text>
</comment>
<comment type="subunit">
    <text evidence="1">F-type ATPases have 2 components, CF(1) - the catalytic core - and CF(0) - the membrane proton channel. CF(1) has five subunits: alpha(3), beta(3), gamma(1), delta(1), epsilon(1). CF(0) has three main subunits: a(1), b(2) and c(9-12). The alpha and beta chains form an alternating ring which encloses part of the gamma chain. CF(1) is attached to CF(0) by a central stalk formed by the gamma and epsilon chains, while a peripheral stalk is formed by the delta and b chains.</text>
</comment>
<comment type="subcellular location">
    <subcellularLocation>
        <location evidence="1">Cell inner membrane</location>
        <topology evidence="1">Multi-pass membrane protein</topology>
    </subcellularLocation>
</comment>
<comment type="similarity">
    <text evidence="1">Belongs to the ATPase A chain family.</text>
</comment>
<sequence>MTSHAPDPIHQFEISRLINVSIGNVDFSFTNVSFFIIATVVLSSVFLFISSSSRRLVPTRMQSISEMAYEFVASTLRESAGVQGMKFFPLVFSLFVFILVANFIGLFPYFYTITSQIMITFSLAMLVILTVIGCGFYKHGIGFLKLFVPSGVPVMILPLVTVIEVISFFSRPISLSLRLFANMLAGHITLKVFSGFIVSMVGLGFIGVGGSILPLIMTVAITALEFLVAFLQAYVFTVLTCMYLNDAVHPGH</sequence>
<reference key="1">
    <citation type="submission" date="2006-12" db="EMBL/GenBank/DDBJ databases">
        <authorList>
            <person name="Hendrix L."/>
            <person name="Mohamoud Y."/>
            <person name="Radune D."/>
            <person name="Shvartsbeyn A."/>
            <person name="Daugherty S."/>
            <person name="Dodson R."/>
            <person name="Durkin A.S."/>
            <person name="Harkins D."/>
            <person name="Huot H."/>
            <person name="Kothari S.P."/>
            <person name="Madupu R."/>
            <person name="Li J."/>
            <person name="Nelson W.C."/>
            <person name="Shrivastava S."/>
            <person name="Giglio M.G."/>
            <person name="Haft D."/>
            <person name="Selengut J."/>
            <person name="Fraser-Ligget C."/>
            <person name="Seshadri R."/>
        </authorList>
    </citation>
    <scope>NUCLEOTIDE SEQUENCE [LARGE SCALE GENOMIC DNA]</scope>
    <source>
        <strain>ATCC 35685 / KC583 / Herrer 020/F12,63</strain>
    </source>
</reference>
<name>ATP6_BARBK</name>
<feature type="chain" id="PRO_0000362239" description="ATP synthase subunit a">
    <location>
        <begin position="1"/>
        <end position="252"/>
    </location>
</feature>
<feature type="transmembrane region" description="Helical" evidence="1">
    <location>
        <begin position="29"/>
        <end position="49"/>
    </location>
</feature>
<feature type="transmembrane region" description="Helical" evidence="1">
    <location>
        <begin position="87"/>
        <end position="107"/>
    </location>
</feature>
<feature type="transmembrane region" description="Helical" evidence="1">
    <location>
        <begin position="117"/>
        <end position="137"/>
    </location>
</feature>
<feature type="transmembrane region" description="Helical" evidence="1">
    <location>
        <begin position="146"/>
        <end position="166"/>
    </location>
</feature>
<feature type="transmembrane region" description="Helical" evidence="1">
    <location>
        <begin position="196"/>
        <end position="216"/>
    </location>
</feature>
<feature type="transmembrane region" description="Helical" evidence="1">
    <location>
        <begin position="219"/>
        <end position="239"/>
    </location>
</feature>
<accession>A1URU2</accession>
<evidence type="ECO:0000255" key="1">
    <source>
        <dbReference type="HAMAP-Rule" id="MF_01393"/>
    </source>
</evidence>
<gene>
    <name evidence="1" type="primary">atpB</name>
    <name type="ordered locus">BARBAKC583_0376</name>
</gene>
<protein>
    <recommendedName>
        <fullName evidence="1">ATP synthase subunit a</fullName>
    </recommendedName>
    <alternativeName>
        <fullName evidence="1">ATP synthase F0 sector subunit a</fullName>
    </alternativeName>
    <alternativeName>
        <fullName evidence="1">F-ATPase subunit 6</fullName>
    </alternativeName>
</protein>
<organism>
    <name type="scientific">Bartonella bacilliformis (strain ATCC 35685 / KC583 / Herrer 020/F12,63)</name>
    <dbReference type="NCBI Taxonomy" id="360095"/>
    <lineage>
        <taxon>Bacteria</taxon>
        <taxon>Pseudomonadati</taxon>
        <taxon>Pseudomonadota</taxon>
        <taxon>Alphaproteobacteria</taxon>
        <taxon>Hyphomicrobiales</taxon>
        <taxon>Bartonellaceae</taxon>
        <taxon>Bartonella</taxon>
    </lineage>
</organism>
<dbReference type="EMBL" id="CP000524">
    <property type="protein sequence ID" value="ABM44998.1"/>
    <property type="molecule type" value="Genomic_DNA"/>
</dbReference>
<dbReference type="RefSeq" id="WP_005766363.1">
    <property type="nucleotide sequence ID" value="NC_008783.1"/>
</dbReference>
<dbReference type="SMR" id="A1URU2"/>
<dbReference type="STRING" id="360095.BARBAKC583_0376"/>
<dbReference type="GeneID" id="4684608"/>
<dbReference type="KEGG" id="bbk:BARBAKC583_0376"/>
<dbReference type="PATRIC" id="fig|360095.6.peg.359"/>
<dbReference type="eggNOG" id="COG0356">
    <property type="taxonomic scope" value="Bacteria"/>
</dbReference>
<dbReference type="HOGENOM" id="CLU_041018_0_2_5"/>
<dbReference type="OrthoDB" id="9809130at2"/>
<dbReference type="Proteomes" id="UP000000643">
    <property type="component" value="Chromosome"/>
</dbReference>
<dbReference type="GO" id="GO:0005886">
    <property type="term" value="C:plasma membrane"/>
    <property type="evidence" value="ECO:0007669"/>
    <property type="project" value="UniProtKB-SubCell"/>
</dbReference>
<dbReference type="GO" id="GO:0045259">
    <property type="term" value="C:proton-transporting ATP synthase complex"/>
    <property type="evidence" value="ECO:0007669"/>
    <property type="project" value="UniProtKB-KW"/>
</dbReference>
<dbReference type="GO" id="GO:0046933">
    <property type="term" value="F:proton-transporting ATP synthase activity, rotational mechanism"/>
    <property type="evidence" value="ECO:0007669"/>
    <property type="project" value="UniProtKB-UniRule"/>
</dbReference>
<dbReference type="CDD" id="cd00310">
    <property type="entry name" value="ATP-synt_Fo_a_6"/>
    <property type="match status" value="1"/>
</dbReference>
<dbReference type="FunFam" id="1.20.120.220:FF:000003">
    <property type="entry name" value="ATP synthase subunit a"/>
    <property type="match status" value="1"/>
</dbReference>
<dbReference type="Gene3D" id="1.20.120.220">
    <property type="entry name" value="ATP synthase, F0 complex, subunit A"/>
    <property type="match status" value="1"/>
</dbReference>
<dbReference type="HAMAP" id="MF_01393">
    <property type="entry name" value="ATP_synth_a_bact"/>
    <property type="match status" value="1"/>
</dbReference>
<dbReference type="InterPro" id="IPR000568">
    <property type="entry name" value="ATP_synth_F0_asu"/>
</dbReference>
<dbReference type="InterPro" id="IPR023011">
    <property type="entry name" value="ATP_synth_F0_asu_AS"/>
</dbReference>
<dbReference type="InterPro" id="IPR045083">
    <property type="entry name" value="ATP_synth_F0_asu_bact/mt"/>
</dbReference>
<dbReference type="InterPro" id="IPR035908">
    <property type="entry name" value="F0_ATP_A_sf"/>
</dbReference>
<dbReference type="NCBIfam" id="TIGR01131">
    <property type="entry name" value="ATP_synt_6_or_A"/>
    <property type="match status" value="1"/>
</dbReference>
<dbReference type="NCBIfam" id="NF004482">
    <property type="entry name" value="PRK05815.2-4"/>
    <property type="match status" value="1"/>
</dbReference>
<dbReference type="PANTHER" id="PTHR11410">
    <property type="entry name" value="ATP SYNTHASE SUBUNIT A"/>
    <property type="match status" value="1"/>
</dbReference>
<dbReference type="PANTHER" id="PTHR11410:SF0">
    <property type="entry name" value="ATP SYNTHASE SUBUNIT A"/>
    <property type="match status" value="1"/>
</dbReference>
<dbReference type="Pfam" id="PF00119">
    <property type="entry name" value="ATP-synt_A"/>
    <property type="match status" value="1"/>
</dbReference>
<dbReference type="PRINTS" id="PR00123">
    <property type="entry name" value="ATPASEA"/>
</dbReference>
<dbReference type="SUPFAM" id="SSF81336">
    <property type="entry name" value="F1F0 ATP synthase subunit A"/>
    <property type="match status" value="1"/>
</dbReference>
<dbReference type="PROSITE" id="PS00449">
    <property type="entry name" value="ATPASE_A"/>
    <property type="match status" value="1"/>
</dbReference>
<keyword id="KW-0066">ATP synthesis</keyword>
<keyword id="KW-0997">Cell inner membrane</keyword>
<keyword id="KW-1003">Cell membrane</keyword>
<keyword id="KW-0138">CF(0)</keyword>
<keyword id="KW-0375">Hydrogen ion transport</keyword>
<keyword id="KW-0406">Ion transport</keyword>
<keyword id="KW-0472">Membrane</keyword>
<keyword id="KW-0812">Transmembrane</keyword>
<keyword id="KW-1133">Transmembrane helix</keyword>
<keyword id="KW-0813">Transport</keyword>